<accession>P0C2V0</accession>
<sequence>MIASHLAFEKLSKLGSKHTML</sequence>
<reference key="1">
    <citation type="journal article" date="2004" name="J. Mass Spectrom.">
        <title>De novo sequencing of antimicrobial peptides isolated from the venom glands of the wolf spider Lycosa singoriensis.</title>
        <authorList>
            <person name="Budnik B.A."/>
            <person name="Olsen J.V."/>
            <person name="Egorov T.A."/>
            <person name="Anisimova V.E."/>
            <person name="Galkina T.G."/>
            <person name="Musolyamov A.K."/>
            <person name="Grishin E.V."/>
            <person name="Zubarev R.A."/>
        </authorList>
    </citation>
    <scope>PROTEIN SEQUENCE</scope>
    <scope>MASS SPECTROMETRY</scope>
    <scope>AMIDATION AT LEU-21</scope>
    <source>
        <tissue>Venom</tissue>
    </source>
</reference>
<evidence type="ECO:0000269" key="1">
    <source>
    </source>
</evidence>
<protein>
    <recommendedName>
        <fullName>M-lycotoxin-Ls4a</fullName>
        <shortName>M-LCTX-Ls4a</shortName>
    </recommendedName>
    <alternativeName>
        <fullName>Peptide 2340</fullName>
    </alternativeName>
</protein>
<proteinExistence type="evidence at protein level"/>
<name>LYC40_LYCSI</name>
<feature type="peptide" id="PRO_0000285260" description="M-lycotoxin-Ls4a">
    <location>
        <begin position="1"/>
        <end position="21"/>
    </location>
</feature>
<feature type="modified residue" description="Leucine amide" evidence="1">
    <location>
        <position position="21"/>
    </location>
</feature>
<feature type="unsure residue" description="I or L">
    <location>
        <position position="2"/>
    </location>
</feature>
<feature type="unsure residue" description="L or I">
    <location>
        <position position="6"/>
    </location>
</feature>
<feature type="unsure residue" description="L or I">
    <location>
        <position position="11"/>
    </location>
</feature>
<feature type="unsure residue" description="L or I">
    <location>
        <position position="14"/>
    </location>
</feature>
<feature type="unsure residue" description="L or I">
    <location>
        <position position="21"/>
    </location>
</feature>
<organism>
    <name type="scientific">Lycosa singoriensis</name>
    <name type="common">Wolf spider</name>
    <name type="synonym">Aranea singoriensis</name>
    <dbReference type="NCBI Taxonomy" id="434756"/>
    <lineage>
        <taxon>Eukaryota</taxon>
        <taxon>Metazoa</taxon>
        <taxon>Ecdysozoa</taxon>
        <taxon>Arthropoda</taxon>
        <taxon>Chelicerata</taxon>
        <taxon>Arachnida</taxon>
        <taxon>Araneae</taxon>
        <taxon>Araneomorphae</taxon>
        <taxon>Entelegynae</taxon>
        <taxon>Lycosoidea</taxon>
        <taxon>Lycosidae</taxon>
        <taxon>Lycosa</taxon>
    </lineage>
</organism>
<keyword id="KW-0027">Amidation</keyword>
<keyword id="KW-0044">Antibiotic</keyword>
<keyword id="KW-0929">Antimicrobial</keyword>
<keyword id="KW-0903">Direct protein sequencing</keyword>
<keyword id="KW-0964">Secreted</keyword>
<comment type="function">
    <text>May inhibit growth of bacteria.</text>
</comment>
<comment type="subcellular location">
    <subcellularLocation>
        <location>Secreted</location>
    </subcellularLocation>
</comment>
<comment type="tissue specificity">
    <text>Expressed by the venom gland.</text>
</comment>
<comment type="mass spectrometry"/>
<comment type="similarity">
    <text>Belongs to the cationic peptide 04 (cupiennin) family. 05 subfamily.</text>
</comment>
<dbReference type="ArachnoServer" id="AS000008">
    <property type="toxin name" value="M-lycotoxin-Ls4a"/>
</dbReference>
<dbReference type="GO" id="GO:0005576">
    <property type="term" value="C:extracellular region"/>
    <property type="evidence" value="ECO:0007669"/>
    <property type="project" value="UniProtKB-SubCell"/>
</dbReference>
<dbReference type="GO" id="GO:0042742">
    <property type="term" value="P:defense response to bacterium"/>
    <property type="evidence" value="ECO:0007669"/>
    <property type="project" value="UniProtKB-KW"/>
</dbReference>